<protein>
    <recommendedName>
        <fullName>Enoyl-[acyl-carrier-protein] reductase [NADH] FabI</fullName>
        <shortName>ENR</shortName>
        <ecNumber>1.3.1.9</ecNumber>
    </recommendedName>
    <alternativeName>
        <fullName>NADH-dependent enoyl-ACP reductase</fullName>
    </alternativeName>
</protein>
<reference key="1">
    <citation type="journal article" date="1998" name="Nature">
        <title>The genome sequence of Rickettsia prowazekii and the origin of mitochondria.</title>
        <authorList>
            <person name="Andersson S.G.E."/>
            <person name="Zomorodipour A."/>
            <person name="Andersson J.O."/>
            <person name="Sicheritz-Ponten T."/>
            <person name="Alsmark U.C.M."/>
            <person name="Podowski R.M."/>
            <person name="Naeslund A.K."/>
            <person name="Eriksson A.-S."/>
            <person name="Winkler H.H."/>
            <person name="Kurland C.G."/>
        </authorList>
    </citation>
    <scope>NUCLEOTIDE SEQUENCE [LARGE SCALE GENOMIC DNA]</scope>
    <source>
        <strain>Madrid E</strain>
    </source>
</reference>
<comment type="function">
    <text evidence="1">Catalyzes the reduction of a carbon-carbon double bond in an enoyl moiety that is covalently linked to an acyl carrier protein (ACP). Involved in the elongation cycle of fatty acid which are used in the lipid metabolism (By similarity).</text>
</comment>
<comment type="catalytic activity">
    <reaction>
        <text>a 2,3-saturated acyl-[ACP] + NAD(+) = a (2E)-enoyl-[ACP] + NADH + H(+)</text>
        <dbReference type="Rhea" id="RHEA:10240"/>
        <dbReference type="Rhea" id="RHEA-COMP:9925"/>
        <dbReference type="Rhea" id="RHEA-COMP:9926"/>
        <dbReference type="ChEBI" id="CHEBI:15378"/>
        <dbReference type="ChEBI" id="CHEBI:57540"/>
        <dbReference type="ChEBI" id="CHEBI:57945"/>
        <dbReference type="ChEBI" id="CHEBI:78784"/>
        <dbReference type="ChEBI" id="CHEBI:78785"/>
        <dbReference type="EC" id="1.3.1.9"/>
    </reaction>
</comment>
<comment type="pathway">
    <text>Lipid metabolism; fatty acid biosynthesis.</text>
</comment>
<comment type="subunit">
    <text evidence="1">Homotetramer.</text>
</comment>
<comment type="similarity">
    <text evidence="2">Belongs to the short-chain dehydrogenases/reductases (SDR) family. FabI subfamily.</text>
</comment>
<gene>
    <name type="primary">fabI</name>
    <name type="ordered locus">RP365</name>
</gene>
<organism>
    <name type="scientific">Rickettsia prowazekii (strain Madrid E)</name>
    <dbReference type="NCBI Taxonomy" id="272947"/>
    <lineage>
        <taxon>Bacteria</taxon>
        <taxon>Pseudomonadati</taxon>
        <taxon>Pseudomonadota</taxon>
        <taxon>Alphaproteobacteria</taxon>
        <taxon>Rickettsiales</taxon>
        <taxon>Rickettsiaceae</taxon>
        <taxon>Rickettsieae</taxon>
        <taxon>Rickettsia</taxon>
        <taxon>typhus group</taxon>
    </lineage>
</organism>
<proteinExistence type="inferred from homology"/>
<feature type="chain" id="PRO_0000054909" description="Enoyl-[acyl-carrier-protein] reductase [NADH] FabI">
    <location>
        <begin position="1"/>
        <end position="261"/>
    </location>
</feature>
<feature type="active site" description="Proton acceptor" evidence="1">
    <location>
        <position position="147"/>
    </location>
</feature>
<feature type="active site" description="Proton acceptor" evidence="1">
    <location>
        <position position="157"/>
    </location>
</feature>
<feature type="binding site" evidence="1">
    <location>
        <position position="15"/>
    </location>
    <ligand>
        <name>NAD(+)</name>
        <dbReference type="ChEBI" id="CHEBI:57540"/>
    </ligand>
</feature>
<feature type="binding site" evidence="1">
    <location>
        <begin position="21"/>
        <end position="22"/>
    </location>
    <ligand>
        <name>NAD(+)</name>
        <dbReference type="ChEBI" id="CHEBI:57540"/>
    </ligand>
</feature>
<feature type="binding site" evidence="1">
    <location>
        <position position="42"/>
    </location>
    <ligand>
        <name>NAD(+)</name>
        <dbReference type="ChEBI" id="CHEBI:57540"/>
    </ligand>
</feature>
<feature type="binding site" evidence="1">
    <location>
        <begin position="66"/>
        <end position="67"/>
    </location>
    <ligand>
        <name>NAD(+)</name>
        <dbReference type="ChEBI" id="CHEBI:57540"/>
    </ligand>
</feature>
<feature type="binding site" evidence="1">
    <location>
        <position position="94"/>
    </location>
    <ligand>
        <name>NAD(+)</name>
        <dbReference type="ChEBI" id="CHEBI:57540"/>
    </ligand>
</feature>
<feature type="binding site" evidence="1">
    <location>
        <position position="97"/>
    </location>
    <ligand>
        <name>substrate</name>
    </ligand>
</feature>
<feature type="binding site" evidence="1">
    <location>
        <position position="164"/>
    </location>
    <ligand>
        <name>NAD(+)</name>
        <dbReference type="ChEBI" id="CHEBI:57540"/>
    </ligand>
</feature>
<feature type="binding site" evidence="1">
    <location>
        <begin position="193"/>
        <end position="197"/>
    </location>
    <ligand>
        <name>NAD(+)</name>
        <dbReference type="ChEBI" id="CHEBI:57540"/>
    </ligand>
</feature>
<keyword id="KW-0275">Fatty acid biosynthesis</keyword>
<keyword id="KW-0276">Fatty acid metabolism</keyword>
<keyword id="KW-0444">Lipid biosynthesis</keyword>
<keyword id="KW-0443">Lipid metabolism</keyword>
<keyword id="KW-0520">NAD</keyword>
<keyword id="KW-0560">Oxidoreductase</keyword>
<keyword id="KW-1185">Reference proteome</keyword>
<dbReference type="EC" id="1.3.1.9"/>
<dbReference type="EMBL" id="AJ235271">
    <property type="protein sequence ID" value="CAA14824.1"/>
    <property type="molecule type" value="Genomic_DNA"/>
</dbReference>
<dbReference type="PIR" id="F71693">
    <property type="entry name" value="F71693"/>
</dbReference>
<dbReference type="RefSeq" id="NP_220748.1">
    <property type="nucleotide sequence ID" value="NC_000963.1"/>
</dbReference>
<dbReference type="RefSeq" id="WP_004597508.1">
    <property type="nucleotide sequence ID" value="NC_000963.1"/>
</dbReference>
<dbReference type="SMR" id="Q9ZDG4"/>
<dbReference type="STRING" id="272947.gene:17555445"/>
<dbReference type="EnsemblBacteria" id="CAA14824">
    <property type="protein sequence ID" value="CAA14824"/>
    <property type="gene ID" value="CAA14824"/>
</dbReference>
<dbReference type="GeneID" id="57569489"/>
<dbReference type="KEGG" id="rpr:RP365"/>
<dbReference type="PATRIC" id="fig|272947.5.peg.374"/>
<dbReference type="eggNOG" id="COG0623">
    <property type="taxonomic scope" value="Bacteria"/>
</dbReference>
<dbReference type="HOGENOM" id="CLU_010194_10_1_5"/>
<dbReference type="OrthoDB" id="9803628at2"/>
<dbReference type="UniPathway" id="UPA00094"/>
<dbReference type="Proteomes" id="UP000002480">
    <property type="component" value="Chromosome"/>
</dbReference>
<dbReference type="GO" id="GO:0004318">
    <property type="term" value="F:enoyl-[acyl-carrier-protein] reductase (NADH) activity"/>
    <property type="evidence" value="ECO:0000250"/>
    <property type="project" value="UniProtKB"/>
</dbReference>
<dbReference type="GO" id="GO:0042802">
    <property type="term" value="F:identical protein binding"/>
    <property type="evidence" value="ECO:0000250"/>
    <property type="project" value="UniProtKB"/>
</dbReference>
<dbReference type="GO" id="GO:0030497">
    <property type="term" value="P:fatty acid elongation"/>
    <property type="evidence" value="ECO:0000250"/>
    <property type="project" value="UniProtKB"/>
</dbReference>
<dbReference type="CDD" id="cd05372">
    <property type="entry name" value="ENR_SDR"/>
    <property type="match status" value="1"/>
</dbReference>
<dbReference type="FunFam" id="1.10.8.400:FF:000001">
    <property type="entry name" value="Enoyl-[acyl-carrier-protein] reductase [NADH]"/>
    <property type="match status" value="1"/>
</dbReference>
<dbReference type="FunFam" id="3.40.50.720:FF:000054">
    <property type="entry name" value="Enoyl-[acyl-carrier-protein] reductase [NADH]"/>
    <property type="match status" value="1"/>
</dbReference>
<dbReference type="Gene3D" id="1.10.8.400">
    <property type="entry name" value="Enoyl acyl carrier protein reductase"/>
    <property type="match status" value="1"/>
</dbReference>
<dbReference type="Gene3D" id="3.40.50.720">
    <property type="entry name" value="NAD(P)-binding Rossmann-like Domain"/>
    <property type="match status" value="1"/>
</dbReference>
<dbReference type="InterPro" id="IPR014358">
    <property type="entry name" value="Enoyl-ACP_Rdtase_NADH"/>
</dbReference>
<dbReference type="InterPro" id="IPR036291">
    <property type="entry name" value="NAD(P)-bd_dom_sf"/>
</dbReference>
<dbReference type="InterPro" id="IPR002347">
    <property type="entry name" value="SDR_fam"/>
</dbReference>
<dbReference type="NCBIfam" id="NF005145">
    <property type="entry name" value="PRK06603.1"/>
    <property type="match status" value="1"/>
</dbReference>
<dbReference type="PANTHER" id="PTHR43159">
    <property type="entry name" value="ENOYL-[ACYL-CARRIER-PROTEIN] REDUCTASE"/>
    <property type="match status" value="1"/>
</dbReference>
<dbReference type="PANTHER" id="PTHR43159:SF2">
    <property type="entry name" value="ENOYL-[ACYL-CARRIER-PROTEIN] REDUCTASE [NADH], CHLOROPLASTIC"/>
    <property type="match status" value="1"/>
</dbReference>
<dbReference type="Pfam" id="PF13561">
    <property type="entry name" value="adh_short_C2"/>
    <property type="match status" value="1"/>
</dbReference>
<dbReference type="PIRSF" id="PIRSF000094">
    <property type="entry name" value="Enoyl-ACP_rdct"/>
    <property type="match status" value="1"/>
</dbReference>
<dbReference type="PRINTS" id="PR00081">
    <property type="entry name" value="GDHRDH"/>
</dbReference>
<dbReference type="SUPFAM" id="SSF51735">
    <property type="entry name" value="NAD(P)-binding Rossmann-fold domains"/>
    <property type="match status" value="1"/>
</dbReference>
<accession>Q9ZDG4</accession>
<evidence type="ECO:0000250" key="1"/>
<evidence type="ECO:0000305" key="2"/>
<sequence length="261" mass="28538">MTTGLLQGKKGLITGIANNMSISWAIAQLAKKHGAELWFTYQSEVLEKRVKPLAEEIGCNFISELDVTNQKSISNLFNDIKEKWNSFDFLLHGMAFANKNELKGRYVETSLENFHNSLHISCYSLLELSRSAETLMHNGGSIVTLTYYGAEKVIPNYNIMGVAKAALEASVKYLANDMGENNIRVNAISAGPIKTLASSAISDFSTMLKSHAATAPLKRNITQEDVGGAAVYLFSELSKGVTGEIHYVDCGYNIIGSSKLL</sequence>
<name>FABI_RICPR</name>